<keyword id="KW-0997">Cell inner membrane</keyword>
<keyword id="KW-1003">Cell membrane</keyword>
<keyword id="KW-0472">Membrane</keyword>
<keyword id="KW-1185">Reference proteome</keyword>
<keyword id="KW-0812">Transmembrane</keyword>
<keyword id="KW-1133">Transmembrane helix</keyword>
<gene>
    <name evidence="1" type="primary">frdC</name>
    <name type="ordered locus">CKO_03680</name>
</gene>
<proteinExistence type="inferred from homology"/>
<name>FRDC_CITK8</name>
<comment type="function">
    <text evidence="1">Two distinct, membrane-bound, FAD-containing enzymes are responsible for the catalysis of fumarate and succinate interconversion; fumarate reductase is used in anaerobic growth, and succinate dehydrogenase is used in aerobic growth. Anchors the catalytic components of the fumarate reductase complex to the cell inner membrane, binds quinones.</text>
</comment>
<comment type="subunit">
    <text evidence="1">Part of an enzyme complex containing four subunits: a flavoprotein (FrdA), an iron-sulfur protein (FrdB), and two hydrophobic anchor proteins (FrdC and FrdD).</text>
</comment>
<comment type="subcellular location">
    <subcellularLocation>
        <location evidence="1">Cell inner membrane</location>
        <topology evidence="1">Multi-pass membrane protein</topology>
    </subcellularLocation>
</comment>
<comment type="similarity">
    <text evidence="1">Belongs to the FrdC family.</text>
</comment>
<feature type="chain" id="PRO_1000045522" description="Fumarate reductase subunit C">
    <location>
        <begin position="1"/>
        <end position="131"/>
    </location>
</feature>
<feature type="transmembrane region" description="Helical" evidence="1">
    <location>
        <begin position="30"/>
        <end position="50"/>
    </location>
</feature>
<feature type="transmembrane region" description="Helical" evidence="1">
    <location>
        <begin position="57"/>
        <end position="77"/>
    </location>
</feature>
<feature type="transmembrane region" description="Helical" evidence="1">
    <location>
        <begin position="109"/>
        <end position="129"/>
    </location>
</feature>
<sequence length="131" mass="14960">MTTKRKAYVRPMTSTWWKKLPFYRFYMLREGTAVPAVWFSIELIFGLFALKHGAESWMGFVGFLQNPVVVILNLIALAAALLHTKTWFELAPKAANIIVKDEKMGPEPIIKGLWVVTAVVTVVILYVALYW</sequence>
<organism>
    <name type="scientific">Citrobacter koseri (strain ATCC BAA-895 / CDC 4225-83 / SGSC4696)</name>
    <dbReference type="NCBI Taxonomy" id="290338"/>
    <lineage>
        <taxon>Bacteria</taxon>
        <taxon>Pseudomonadati</taxon>
        <taxon>Pseudomonadota</taxon>
        <taxon>Gammaproteobacteria</taxon>
        <taxon>Enterobacterales</taxon>
        <taxon>Enterobacteriaceae</taxon>
        <taxon>Citrobacter</taxon>
    </lineage>
</organism>
<accession>A8AMP4</accession>
<dbReference type="EMBL" id="CP000822">
    <property type="protein sequence ID" value="ABV14757.1"/>
    <property type="molecule type" value="Genomic_DNA"/>
</dbReference>
<dbReference type="RefSeq" id="WP_012134454.1">
    <property type="nucleotide sequence ID" value="NC_009792.1"/>
</dbReference>
<dbReference type="SMR" id="A8AMP4"/>
<dbReference type="STRING" id="290338.CKO_03680"/>
<dbReference type="GeneID" id="45137384"/>
<dbReference type="KEGG" id="cko:CKO_03680"/>
<dbReference type="HOGENOM" id="CLU_156492_0_0_6"/>
<dbReference type="OrthoDB" id="8909678at2"/>
<dbReference type="Proteomes" id="UP000008148">
    <property type="component" value="Chromosome"/>
</dbReference>
<dbReference type="GO" id="GO:0045283">
    <property type="term" value="C:fumarate reductase complex"/>
    <property type="evidence" value="ECO:0007669"/>
    <property type="project" value="UniProtKB-UniRule"/>
</dbReference>
<dbReference type="GO" id="GO:0005886">
    <property type="term" value="C:plasma membrane"/>
    <property type="evidence" value="ECO:0007669"/>
    <property type="project" value="UniProtKB-SubCell"/>
</dbReference>
<dbReference type="GO" id="GO:0000104">
    <property type="term" value="F:succinate dehydrogenase activity"/>
    <property type="evidence" value="ECO:0007669"/>
    <property type="project" value="UniProtKB-UniRule"/>
</dbReference>
<dbReference type="CDD" id="cd00546">
    <property type="entry name" value="QFR_TypeD_subunitC"/>
    <property type="match status" value="1"/>
</dbReference>
<dbReference type="Gene3D" id="1.20.1300.10">
    <property type="entry name" value="Fumarate reductase/succinate dehydrogenase, transmembrane subunit"/>
    <property type="match status" value="1"/>
</dbReference>
<dbReference type="HAMAP" id="MF_00708">
    <property type="entry name" value="Fumarate_red_C"/>
    <property type="match status" value="1"/>
</dbReference>
<dbReference type="InterPro" id="IPR003510">
    <property type="entry name" value="Fumarate_red_C"/>
</dbReference>
<dbReference type="InterPro" id="IPR034804">
    <property type="entry name" value="SQR/QFR_C/D"/>
</dbReference>
<dbReference type="NCBIfam" id="NF003445">
    <property type="entry name" value="PRK04987.1"/>
    <property type="match status" value="1"/>
</dbReference>
<dbReference type="Pfam" id="PF02300">
    <property type="entry name" value="Fumarate_red_C"/>
    <property type="match status" value="1"/>
</dbReference>
<dbReference type="PIRSF" id="PIRSF000180">
    <property type="entry name" value="FrdC"/>
    <property type="match status" value="1"/>
</dbReference>
<dbReference type="SUPFAM" id="SSF81343">
    <property type="entry name" value="Fumarate reductase respiratory complex transmembrane subunits"/>
    <property type="match status" value="1"/>
</dbReference>
<reference key="1">
    <citation type="submission" date="2007-08" db="EMBL/GenBank/DDBJ databases">
        <authorList>
            <consortium name="The Citrobacter koseri Genome Sequencing Project"/>
            <person name="McClelland M."/>
            <person name="Sanderson E.K."/>
            <person name="Porwollik S."/>
            <person name="Spieth J."/>
            <person name="Clifton W.S."/>
            <person name="Latreille P."/>
            <person name="Courtney L."/>
            <person name="Wang C."/>
            <person name="Pepin K."/>
            <person name="Bhonagiri V."/>
            <person name="Nash W."/>
            <person name="Johnson M."/>
            <person name="Thiruvilangam P."/>
            <person name="Wilson R."/>
        </authorList>
    </citation>
    <scope>NUCLEOTIDE SEQUENCE [LARGE SCALE GENOMIC DNA]</scope>
    <source>
        <strain>ATCC BAA-895 / CDC 4225-83 / SGSC4696</strain>
    </source>
</reference>
<evidence type="ECO:0000255" key="1">
    <source>
        <dbReference type="HAMAP-Rule" id="MF_00708"/>
    </source>
</evidence>
<protein>
    <recommendedName>
        <fullName evidence="1">Fumarate reductase subunit C</fullName>
    </recommendedName>
    <alternativeName>
        <fullName evidence="1">Fumarate reductase 15 kDa hydrophobic protein</fullName>
    </alternativeName>
    <alternativeName>
        <fullName evidence="1">Quinol-fumarate reductase subunit C</fullName>
        <shortName evidence="1">QFR subunit C</shortName>
    </alternativeName>
</protein>